<protein>
    <recommendedName>
        <fullName evidence="1">Aspartate carbamoyltransferase catalytic subunit</fullName>
        <ecNumber evidence="1">2.1.3.2</ecNumber>
    </recommendedName>
    <alternativeName>
        <fullName evidence="1">Aspartate transcarbamylase</fullName>
        <shortName evidence="1">ATCase</shortName>
    </alternativeName>
</protein>
<reference key="1">
    <citation type="journal article" date="1999" name="Eur. J. Biochem.">
        <title>Aspartate carbamoyltransferase catalytic subunit from the thermoacidophilic archaeon Sulfolobus acidocaldarius. Cloning, sequence analysis, enzyme purification and characterization.</title>
        <authorList>
            <person name="Durbecq V."/>
            <person name="Thia-Toong T.-L."/>
            <person name="Charlier D.R.M."/>
            <person name="Villeret V."/>
            <person name="Roovers M."/>
            <person name="Wattiez R."/>
            <person name="Legrain C."/>
            <person name="Glansdorff N."/>
        </authorList>
    </citation>
    <scope>NUCLEOTIDE SEQUENCE [GENOMIC DNA]</scope>
    <scope>CHARACTERIZATION</scope>
    <source>
        <strain>ATCC 33909 / DSM 639 / JCM 8929 / NBRC 15157 / NCIMB 11770</strain>
    </source>
</reference>
<reference key="2">
    <citation type="journal article" date="2002" name="J. Bacteriol.">
        <title>Genes of de novo pyrimidine biosynthesis from the hyperthermoacidophilic crenarchaeote Sulfolobus acidocaldarius: novel organization in a bipolar operon.</title>
        <authorList>
            <person name="Thia-Toong T.-L."/>
            <person name="Roovers M."/>
            <person name="Durbecq V."/>
            <person name="Gigot D."/>
            <person name="Glansdorff N."/>
            <person name="Charlier D.R.M."/>
        </authorList>
    </citation>
    <scope>NUCLEOTIDE SEQUENCE [GENOMIC DNA]</scope>
    <source>
        <strain>ATCC 33909 / DSM 639 / JCM 8929 / NBRC 15157 / NCIMB 11770</strain>
    </source>
</reference>
<reference key="3">
    <citation type="journal article" date="2005" name="J. Bacteriol.">
        <title>The genome of Sulfolobus acidocaldarius, a model organism of the Crenarchaeota.</title>
        <authorList>
            <person name="Chen L."/>
            <person name="Bruegger K."/>
            <person name="Skovgaard M."/>
            <person name="Redder P."/>
            <person name="She Q."/>
            <person name="Torarinsson E."/>
            <person name="Greve B."/>
            <person name="Awayez M."/>
            <person name="Zibat A."/>
            <person name="Klenk H.-P."/>
            <person name="Garrett R.A."/>
        </authorList>
    </citation>
    <scope>NUCLEOTIDE SEQUENCE [LARGE SCALE GENOMIC DNA]</scope>
    <source>
        <strain>ATCC 33909 / DSM 639 / JCM 8929 / NBRC 15157 / NCIMB 11770</strain>
    </source>
</reference>
<accession>Q55338</accession>
<accession>Q4J8H1</accession>
<keyword id="KW-0002">3D-structure</keyword>
<keyword id="KW-0665">Pyrimidine biosynthesis</keyword>
<keyword id="KW-1185">Reference proteome</keyword>
<keyword id="KW-0808">Transferase</keyword>
<dbReference type="EC" id="2.1.3.2" evidence="1"/>
<dbReference type="EMBL" id="X99872">
    <property type="protein sequence ID" value="CAA68165.1"/>
    <property type="molecule type" value="Genomic_DNA"/>
</dbReference>
<dbReference type="EMBL" id="AJ459777">
    <property type="protein sequence ID" value="CAD31976.1"/>
    <property type="molecule type" value="Genomic_DNA"/>
</dbReference>
<dbReference type="EMBL" id="CP000077">
    <property type="protein sequence ID" value="AAY80909.1"/>
    <property type="molecule type" value="Genomic_DNA"/>
</dbReference>
<dbReference type="RefSeq" id="WP_011278411.1">
    <property type="nucleotide sequence ID" value="NC_007181.1"/>
</dbReference>
<dbReference type="PDB" id="1PG5">
    <property type="method" value="X-ray"/>
    <property type="resolution" value="2.60 A"/>
    <property type="chains" value="A=1-299"/>
</dbReference>
<dbReference type="PDB" id="2BE9">
    <property type="method" value="X-ray"/>
    <property type="resolution" value="2.60 A"/>
    <property type="chains" value="A=1-299"/>
</dbReference>
<dbReference type="PDBsum" id="1PG5"/>
<dbReference type="PDBsum" id="2BE9"/>
<dbReference type="SMR" id="Q55338"/>
<dbReference type="IntAct" id="Q55338">
    <property type="interactions" value="1"/>
</dbReference>
<dbReference type="STRING" id="330779.Saci_1596"/>
<dbReference type="GeneID" id="14552089"/>
<dbReference type="GeneID" id="78441939"/>
<dbReference type="KEGG" id="sai:Saci_1596"/>
<dbReference type="PATRIC" id="fig|330779.12.peg.1536"/>
<dbReference type="eggNOG" id="arCOG00911">
    <property type="taxonomic scope" value="Archaea"/>
</dbReference>
<dbReference type="HOGENOM" id="CLU_043846_1_2_2"/>
<dbReference type="BRENDA" id="2.1.3.2">
    <property type="organism ID" value="6160"/>
</dbReference>
<dbReference type="UniPathway" id="UPA00070">
    <property type="reaction ID" value="UER00116"/>
</dbReference>
<dbReference type="EvolutionaryTrace" id="Q55338"/>
<dbReference type="Proteomes" id="UP000001018">
    <property type="component" value="Chromosome"/>
</dbReference>
<dbReference type="GO" id="GO:0016597">
    <property type="term" value="F:amino acid binding"/>
    <property type="evidence" value="ECO:0007669"/>
    <property type="project" value="InterPro"/>
</dbReference>
<dbReference type="GO" id="GO:0004070">
    <property type="term" value="F:aspartate carbamoyltransferase activity"/>
    <property type="evidence" value="ECO:0007669"/>
    <property type="project" value="UniProtKB-UniRule"/>
</dbReference>
<dbReference type="GO" id="GO:0006207">
    <property type="term" value="P:'de novo' pyrimidine nucleobase biosynthetic process"/>
    <property type="evidence" value="ECO:0007669"/>
    <property type="project" value="InterPro"/>
</dbReference>
<dbReference type="GO" id="GO:0044205">
    <property type="term" value="P:'de novo' UMP biosynthetic process"/>
    <property type="evidence" value="ECO:0007669"/>
    <property type="project" value="UniProtKB-UniRule"/>
</dbReference>
<dbReference type="GO" id="GO:0006520">
    <property type="term" value="P:amino acid metabolic process"/>
    <property type="evidence" value="ECO:0007669"/>
    <property type="project" value="InterPro"/>
</dbReference>
<dbReference type="FunFam" id="3.40.50.1370:FF:000002">
    <property type="entry name" value="Aspartate carbamoyltransferase 2"/>
    <property type="match status" value="1"/>
</dbReference>
<dbReference type="Gene3D" id="3.40.50.1370">
    <property type="entry name" value="Aspartate/ornithine carbamoyltransferase"/>
    <property type="match status" value="2"/>
</dbReference>
<dbReference type="HAMAP" id="MF_00001">
    <property type="entry name" value="Asp_carb_tr"/>
    <property type="match status" value="1"/>
</dbReference>
<dbReference type="InterPro" id="IPR006132">
    <property type="entry name" value="Asp/Orn_carbamoyltranf_P-bd"/>
</dbReference>
<dbReference type="InterPro" id="IPR006130">
    <property type="entry name" value="Asp/Orn_carbamoylTrfase"/>
</dbReference>
<dbReference type="InterPro" id="IPR036901">
    <property type="entry name" value="Asp/Orn_carbamoylTrfase_sf"/>
</dbReference>
<dbReference type="InterPro" id="IPR002082">
    <property type="entry name" value="Asp_carbamoyltransf"/>
</dbReference>
<dbReference type="InterPro" id="IPR006131">
    <property type="entry name" value="Asp_carbamoyltransf_Asp/Orn-bd"/>
</dbReference>
<dbReference type="NCBIfam" id="TIGR00670">
    <property type="entry name" value="asp_carb_tr"/>
    <property type="match status" value="1"/>
</dbReference>
<dbReference type="NCBIfam" id="NF002032">
    <property type="entry name" value="PRK00856.1"/>
    <property type="match status" value="1"/>
</dbReference>
<dbReference type="PANTHER" id="PTHR45753:SF6">
    <property type="entry name" value="ASPARTATE CARBAMOYLTRANSFERASE"/>
    <property type="match status" value="1"/>
</dbReference>
<dbReference type="PANTHER" id="PTHR45753">
    <property type="entry name" value="ORNITHINE CARBAMOYLTRANSFERASE, MITOCHONDRIAL"/>
    <property type="match status" value="1"/>
</dbReference>
<dbReference type="Pfam" id="PF00185">
    <property type="entry name" value="OTCace"/>
    <property type="match status" value="1"/>
</dbReference>
<dbReference type="Pfam" id="PF02729">
    <property type="entry name" value="OTCace_N"/>
    <property type="match status" value="1"/>
</dbReference>
<dbReference type="PRINTS" id="PR00100">
    <property type="entry name" value="AOTCASE"/>
</dbReference>
<dbReference type="PRINTS" id="PR00101">
    <property type="entry name" value="ATCASE"/>
</dbReference>
<dbReference type="SUPFAM" id="SSF53671">
    <property type="entry name" value="Aspartate/ornithine carbamoyltransferase"/>
    <property type="match status" value="1"/>
</dbReference>
<dbReference type="PROSITE" id="PS00097">
    <property type="entry name" value="CARBAMOYLTRANSFERASE"/>
    <property type="match status" value="1"/>
</dbReference>
<proteinExistence type="evidence at protein level"/>
<sequence length="299" mass="34171">MKHIISAYNFSRDELEDIFALTDKYSKNLNDTRKILSGKTISIAFFEPSTRTYLSFQKAIINLGGDVIGFSGEESTSVAKGENLADTIRMLNNYSDGIVMRHKYDGASRFASEISDIPVINAGDGKHEHPTQAVIDIYTINKHFNTIDGLVFALLGDLKYARTVNSLLRILTRFRPKLVYLISPQLLRARKEILDELNYPVKEVENPFEVINEVDVLYVTRIQKERFVDEMEYEKIKGSYIVSLDLANKMKKDSIILHPLPRVNEIDRKVDKTTKAKYFEQASYGVPVRMSILTKIYGE</sequence>
<evidence type="ECO:0000255" key="1">
    <source>
        <dbReference type="HAMAP-Rule" id="MF_00001"/>
    </source>
</evidence>
<evidence type="ECO:0000305" key="2"/>
<evidence type="ECO:0007829" key="3">
    <source>
        <dbReference type="PDB" id="1PG5"/>
    </source>
</evidence>
<evidence type="ECO:0007829" key="4">
    <source>
        <dbReference type="PDB" id="2BE9"/>
    </source>
</evidence>
<organism>
    <name type="scientific">Sulfolobus acidocaldarius (strain ATCC 33909 / DSM 639 / JCM 8929 / NBRC 15157 / NCIMB 11770)</name>
    <dbReference type="NCBI Taxonomy" id="330779"/>
    <lineage>
        <taxon>Archaea</taxon>
        <taxon>Thermoproteota</taxon>
        <taxon>Thermoprotei</taxon>
        <taxon>Sulfolobales</taxon>
        <taxon>Sulfolobaceae</taxon>
        <taxon>Sulfolobus</taxon>
    </lineage>
</organism>
<gene>
    <name evidence="1" type="primary">pyrB</name>
    <name type="ordered locus">Saci_1596</name>
</gene>
<name>PYRB_SULAC</name>
<feature type="chain" id="PRO_0000113258" description="Aspartate carbamoyltransferase catalytic subunit">
    <location>
        <begin position="1"/>
        <end position="299"/>
    </location>
</feature>
<feature type="binding site" evidence="1">
    <location>
        <position position="51"/>
    </location>
    <ligand>
        <name>carbamoyl phosphate</name>
        <dbReference type="ChEBI" id="CHEBI:58228"/>
    </ligand>
</feature>
<feature type="binding site" evidence="1">
    <location>
        <position position="52"/>
    </location>
    <ligand>
        <name>carbamoyl phosphate</name>
        <dbReference type="ChEBI" id="CHEBI:58228"/>
    </ligand>
</feature>
<feature type="binding site" evidence="1">
    <location>
        <position position="80"/>
    </location>
    <ligand>
        <name>L-aspartate</name>
        <dbReference type="ChEBI" id="CHEBI:29991"/>
    </ligand>
</feature>
<feature type="binding site" evidence="1">
    <location>
        <position position="101"/>
    </location>
    <ligand>
        <name>carbamoyl phosphate</name>
        <dbReference type="ChEBI" id="CHEBI:58228"/>
    </ligand>
</feature>
<feature type="binding site" evidence="1">
    <location>
        <position position="129"/>
    </location>
    <ligand>
        <name>carbamoyl phosphate</name>
        <dbReference type="ChEBI" id="CHEBI:58228"/>
    </ligand>
</feature>
<feature type="binding site" evidence="1">
    <location>
        <position position="132"/>
    </location>
    <ligand>
        <name>carbamoyl phosphate</name>
        <dbReference type="ChEBI" id="CHEBI:58228"/>
    </ligand>
</feature>
<feature type="binding site" evidence="1">
    <location>
        <position position="162"/>
    </location>
    <ligand>
        <name>L-aspartate</name>
        <dbReference type="ChEBI" id="CHEBI:29991"/>
    </ligand>
</feature>
<feature type="binding site" evidence="1">
    <location>
        <position position="221"/>
    </location>
    <ligand>
        <name>L-aspartate</name>
        <dbReference type="ChEBI" id="CHEBI:29991"/>
    </ligand>
</feature>
<feature type="binding site" evidence="1">
    <location>
        <position position="260"/>
    </location>
    <ligand>
        <name>carbamoyl phosphate</name>
        <dbReference type="ChEBI" id="CHEBI:58228"/>
    </ligand>
</feature>
<feature type="binding site" evidence="1">
    <location>
        <position position="261"/>
    </location>
    <ligand>
        <name>carbamoyl phosphate</name>
        <dbReference type="ChEBI" id="CHEBI:58228"/>
    </ligand>
</feature>
<feature type="helix" evidence="3">
    <location>
        <begin position="7"/>
        <end position="9"/>
    </location>
</feature>
<feature type="helix" evidence="3">
    <location>
        <begin position="12"/>
        <end position="26"/>
    </location>
</feature>
<feature type="turn" evidence="3">
    <location>
        <begin position="35"/>
        <end position="38"/>
    </location>
</feature>
<feature type="strand" evidence="3">
    <location>
        <begin position="40"/>
        <end position="47"/>
    </location>
</feature>
<feature type="helix" evidence="3">
    <location>
        <begin position="50"/>
        <end position="62"/>
    </location>
</feature>
<feature type="strand" evidence="3">
    <location>
        <begin position="66"/>
        <end position="71"/>
    </location>
</feature>
<feature type="helix" evidence="3">
    <location>
        <begin position="84"/>
        <end position="94"/>
    </location>
</feature>
<feature type="strand" evidence="3">
    <location>
        <begin position="96"/>
        <end position="105"/>
    </location>
</feature>
<feature type="helix" evidence="3">
    <location>
        <begin position="107"/>
        <end position="114"/>
    </location>
</feature>
<feature type="strand" evidence="3">
    <location>
        <begin position="119"/>
        <end position="124"/>
    </location>
</feature>
<feature type="turn" evidence="3">
    <location>
        <begin position="125"/>
        <end position="127"/>
    </location>
</feature>
<feature type="helix" evidence="3">
    <location>
        <begin position="130"/>
        <end position="144"/>
    </location>
</feature>
<feature type="strand" evidence="3">
    <location>
        <begin position="151"/>
        <end position="156"/>
    </location>
</feature>
<feature type="helix" evidence="3">
    <location>
        <begin position="162"/>
        <end position="170"/>
    </location>
</feature>
<feature type="helix" evidence="3">
    <location>
        <begin position="171"/>
        <end position="173"/>
    </location>
</feature>
<feature type="strand" evidence="3">
    <location>
        <begin position="177"/>
        <end position="182"/>
    </location>
</feature>
<feature type="helix" evidence="3">
    <location>
        <begin position="185"/>
        <end position="187"/>
    </location>
</feature>
<feature type="helix" evidence="3">
    <location>
        <begin position="191"/>
        <end position="194"/>
    </location>
</feature>
<feature type="strand" evidence="3">
    <location>
        <begin position="201"/>
        <end position="205"/>
    </location>
</feature>
<feature type="helix" evidence="3">
    <location>
        <begin position="207"/>
        <end position="209"/>
    </location>
</feature>
<feature type="helix" evidence="3">
    <location>
        <begin position="211"/>
        <end position="213"/>
    </location>
</feature>
<feature type="strand" evidence="3">
    <location>
        <begin position="215"/>
        <end position="220"/>
    </location>
</feature>
<feature type="strand" evidence="4">
    <location>
        <begin position="227"/>
        <end position="229"/>
    </location>
</feature>
<feature type="helix" evidence="3">
    <location>
        <begin position="230"/>
        <end position="236"/>
    </location>
</feature>
<feature type="helix" evidence="3">
    <location>
        <begin position="237"/>
        <end position="240"/>
    </location>
</feature>
<feature type="helix" evidence="3">
    <location>
        <begin position="244"/>
        <end position="248"/>
    </location>
</feature>
<feature type="strand" evidence="3">
    <location>
        <begin position="255"/>
        <end position="257"/>
    </location>
</feature>
<feature type="strand" evidence="3">
    <location>
        <begin position="263"/>
        <end position="266"/>
    </location>
</feature>
<feature type="helix" evidence="3">
    <location>
        <begin position="268"/>
        <end position="272"/>
    </location>
</feature>
<feature type="helix" evidence="3">
    <location>
        <begin position="278"/>
        <end position="297"/>
    </location>
</feature>
<comment type="function">
    <text evidence="1">Catalyzes the condensation of carbamoyl phosphate and aspartate to form carbamoyl aspartate and inorganic phosphate, the committed step in the de novo pyrimidine nucleotide biosynthesis pathway.</text>
</comment>
<comment type="catalytic activity">
    <reaction evidence="1">
        <text>carbamoyl phosphate + L-aspartate = N-carbamoyl-L-aspartate + phosphate + H(+)</text>
        <dbReference type="Rhea" id="RHEA:20013"/>
        <dbReference type="ChEBI" id="CHEBI:15378"/>
        <dbReference type="ChEBI" id="CHEBI:29991"/>
        <dbReference type="ChEBI" id="CHEBI:32814"/>
        <dbReference type="ChEBI" id="CHEBI:43474"/>
        <dbReference type="ChEBI" id="CHEBI:58228"/>
        <dbReference type="EC" id="2.1.3.2"/>
    </reaction>
</comment>
<comment type="pathway">
    <text evidence="1">Pyrimidine metabolism; UMP biosynthesis via de novo pathway; (S)-dihydroorotate from bicarbonate: step 2/3.</text>
</comment>
<comment type="subunit">
    <text evidence="1">Heterooligomer of catalytic and regulatory chains.</text>
</comment>
<comment type="similarity">
    <text evidence="1 2">Belongs to the aspartate/ornithine carbamoyltransferase superfamily. ATCase family.</text>
</comment>